<sequence length="792" mass="88588">MPVVKGGVWTNIEDEVLRAAVSKYGLNQWARVSSLLARKTPKQCKARWVEWLDPGIRKVEWSREEDEKLLHLAKLMPTQWRTIAPIVGRTATQCLERYQKLLDEAEARENDELGLGGPSGGEAAAPSADDVRRLRPGELDPDPESKPARPDTIDLDEDEKEMLSEARARLANTQGKKAKRKARERQLEESRRLAVLQKRRELKNAGINIKVVTRKKGEMDYNADIPFEKPAAPGFYDTTEEEARNERQREMFDPRKQQLANKRKGDQEEDADRKKRKNDKNGSSAFAAAARAGQMQKIREAEQSSKRRALVLPAPQVSESEMEDIIKMGMAGDRASKMSGDDETTRGLIGNYTSIVGGTPIRTPRAPPEEDHIANEIRNIRALTETQSSLLGGENTPLHEGGSSTGFDGIAPRRQQIVTPNPMATPFRQANGLGATPLHGGIGPGATPLRTPRDQFALNQMEGGQLIGTTPRDIRLHQKAVSQAIRSKLASLPKPKETEWELEELPSESAEPTVAAEISEEDAAERDRREREARERAAQAELKRQTQVYQRGLPRPSVLDIDALMARASQVTDPINGMIAKEAALLIANDAQKFRLPNGKVEGKARKLERLNDELIEAARAAIVAEVASSNQQQEWLQGFDDRWSSTHSNALPGLANYGDDDEDENMYRQEQRMIDAFENVQASLLATAERGNKLEKKLALHYGGYQNRAKTLRTKIVEASSALENSKYELNAFQTLQISEESAISRRLEKLRDDVAFVLKREREAQETYRIRKEELDELVAGTEAVVNGWH</sequence>
<comment type="function">
    <text evidence="1">Involved in pre-mRNA splicing and cell cycle control.</text>
</comment>
<comment type="subunit">
    <text evidence="1">Associated with the spliceosome.</text>
</comment>
<comment type="subcellular location">
    <subcellularLocation>
        <location evidence="1">Cytoplasm</location>
    </subcellularLocation>
    <subcellularLocation>
        <location evidence="3">Nucleus</location>
    </subcellularLocation>
</comment>
<comment type="similarity">
    <text evidence="5">Belongs to the CEF1 family.</text>
</comment>
<dbReference type="EMBL" id="AAHF01000008">
    <property type="protein sequence ID" value="EAL87645.1"/>
    <property type="molecule type" value="Genomic_DNA"/>
</dbReference>
<dbReference type="RefSeq" id="XP_749683.1">
    <property type="nucleotide sequence ID" value="XM_744590.1"/>
</dbReference>
<dbReference type="SMR" id="Q4WHG0"/>
<dbReference type="STRING" id="330879.Q4WHG0"/>
<dbReference type="EnsemblFungi" id="EAL87645">
    <property type="protein sequence ID" value="EAL87645"/>
    <property type="gene ID" value="AFUA_2G05540"/>
</dbReference>
<dbReference type="GeneID" id="3506710"/>
<dbReference type="KEGG" id="afm:AFUA_2G05540"/>
<dbReference type="VEuPathDB" id="FungiDB:Afu2g05540"/>
<dbReference type="eggNOG" id="KOG0050">
    <property type="taxonomic scope" value="Eukaryota"/>
</dbReference>
<dbReference type="HOGENOM" id="CLU_009082_0_0_1"/>
<dbReference type="InParanoid" id="Q4WHG0"/>
<dbReference type="OMA" id="KMGMAGE"/>
<dbReference type="OrthoDB" id="1410009at2759"/>
<dbReference type="Proteomes" id="UP000002530">
    <property type="component" value="Chromosome 2"/>
</dbReference>
<dbReference type="GO" id="GO:0005829">
    <property type="term" value="C:cytosol"/>
    <property type="evidence" value="ECO:0007669"/>
    <property type="project" value="EnsemblFungi"/>
</dbReference>
<dbReference type="GO" id="GO:0140602">
    <property type="term" value="C:nucleolar peripheral inclusion body"/>
    <property type="evidence" value="ECO:0007669"/>
    <property type="project" value="EnsemblFungi"/>
</dbReference>
<dbReference type="GO" id="GO:0071014">
    <property type="term" value="C:post-mRNA release spliceosomal complex"/>
    <property type="evidence" value="ECO:0007669"/>
    <property type="project" value="EnsemblFungi"/>
</dbReference>
<dbReference type="GO" id="GO:0000974">
    <property type="term" value="C:Prp19 complex"/>
    <property type="evidence" value="ECO:0000318"/>
    <property type="project" value="GO_Central"/>
</dbReference>
<dbReference type="GO" id="GO:0005681">
    <property type="term" value="C:spliceosomal complex"/>
    <property type="evidence" value="ECO:0000318"/>
    <property type="project" value="GO_Central"/>
</dbReference>
<dbReference type="GO" id="GO:0003677">
    <property type="term" value="F:DNA binding"/>
    <property type="evidence" value="ECO:0007669"/>
    <property type="project" value="UniProtKB-KW"/>
</dbReference>
<dbReference type="GO" id="GO:0045292">
    <property type="term" value="P:mRNA cis splicing, via spliceosome"/>
    <property type="evidence" value="ECO:0007669"/>
    <property type="project" value="EnsemblFungi"/>
</dbReference>
<dbReference type="GO" id="GO:0000398">
    <property type="term" value="P:mRNA splicing, via spliceosome"/>
    <property type="evidence" value="ECO:0000318"/>
    <property type="project" value="GO_Central"/>
</dbReference>
<dbReference type="CDD" id="cd00167">
    <property type="entry name" value="SANT"/>
    <property type="match status" value="1"/>
</dbReference>
<dbReference type="CDD" id="cd11659">
    <property type="entry name" value="SANT_CDC5_II"/>
    <property type="match status" value="1"/>
</dbReference>
<dbReference type="FunFam" id="1.10.10.60:FF:000021">
    <property type="entry name" value="CDC5 cell division cycle 5-like"/>
    <property type="match status" value="1"/>
</dbReference>
<dbReference type="Gene3D" id="1.10.10.60">
    <property type="entry name" value="Homeodomain-like"/>
    <property type="match status" value="2"/>
</dbReference>
<dbReference type="InterPro" id="IPR047242">
    <property type="entry name" value="CDC5L/Cef1"/>
</dbReference>
<dbReference type="InterPro" id="IPR021786">
    <property type="entry name" value="Cdc5p/Cef1_C"/>
</dbReference>
<dbReference type="InterPro" id="IPR009057">
    <property type="entry name" value="Homeodomain-like_sf"/>
</dbReference>
<dbReference type="InterPro" id="IPR017930">
    <property type="entry name" value="Myb_dom"/>
</dbReference>
<dbReference type="InterPro" id="IPR001005">
    <property type="entry name" value="SANT/Myb"/>
</dbReference>
<dbReference type="InterPro" id="IPR047240">
    <property type="entry name" value="SANT_CDC5L_II"/>
</dbReference>
<dbReference type="PANTHER" id="PTHR45885">
    <property type="entry name" value="CELL DIVISION CYCLE 5-LIKE PROTEIN"/>
    <property type="match status" value="1"/>
</dbReference>
<dbReference type="PANTHER" id="PTHR45885:SF1">
    <property type="entry name" value="CELL DIVISION CYCLE 5-LIKE PROTEIN"/>
    <property type="match status" value="1"/>
</dbReference>
<dbReference type="Pfam" id="PF11831">
    <property type="entry name" value="Myb_Cef"/>
    <property type="match status" value="1"/>
</dbReference>
<dbReference type="Pfam" id="PF13921">
    <property type="entry name" value="Myb_DNA-bind_6"/>
    <property type="match status" value="1"/>
</dbReference>
<dbReference type="SMART" id="SM00717">
    <property type="entry name" value="SANT"/>
    <property type="match status" value="2"/>
</dbReference>
<dbReference type="SUPFAM" id="SSF46689">
    <property type="entry name" value="Homeodomain-like"/>
    <property type="match status" value="1"/>
</dbReference>
<dbReference type="PROSITE" id="PS51294">
    <property type="entry name" value="HTH_MYB"/>
    <property type="match status" value="2"/>
</dbReference>
<keyword id="KW-0175">Coiled coil</keyword>
<keyword id="KW-0963">Cytoplasm</keyword>
<keyword id="KW-0238">DNA-binding</keyword>
<keyword id="KW-0507">mRNA processing</keyword>
<keyword id="KW-0508">mRNA splicing</keyword>
<keyword id="KW-0539">Nucleus</keyword>
<keyword id="KW-1185">Reference proteome</keyword>
<keyword id="KW-0677">Repeat</keyword>
<keyword id="KW-0747">Spliceosome</keyword>
<name>CEF1_ASPFU</name>
<organism>
    <name type="scientific">Aspergillus fumigatus (strain ATCC MYA-4609 / CBS 101355 / FGSC A1100 / Af293)</name>
    <name type="common">Neosartorya fumigata</name>
    <dbReference type="NCBI Taxonomy" id="330879"/>
    <lineage>
        <taxon>Eukaryota</taxon>
        <taxon>Fungi</taxon>
        <taxon>Dikarya</taxon>
        <taxon>Ascomycota</taxon>
        <taxon>Pezizomycotina</taxon>
        <taxon>Eurotiomycetes</taxon>
        <taxon>Eurotiomycetidae</taxon>
        <taxon>Eurotiales</taxon>
        <taxon>Aspergillaceae</taxon>
        <taxon>Aspergillus</taxon>
        <taxon>Aspergillus subgen. Fumigati</taxon>
    </lineage>
</organism>
<proteinExistence type="inferred from homology"/>
<feature type="chain" id="PRO_0000197095" description="Pre-mRNA-splicing factor cef1">
    <location>
        <begin position="1"/>
        <end position="792"/>
    </location>
</feature>
<feature type="domain" description="HTH myb-type 1" evidence="3">
    <location>
        <begin position="1"/>
        <end position="56"/>
    </location>
</feature>
<feature type="domain" description="HTH myb-type 2" evidence="3">
    <location>
        <begin position="57"/>
        <end position="106"/>
    </location>
</feature>
<feature type="DNA-binding region" description="H-T-H motif" evidence="3">
    <location>
        <begin position="29"/>
        <end position="52"/>
    </location>
</feature>
<feature type="DNA-binding region" description="H-T-H motif" evidence="3">
    <location>
        <begin position="80"/>
        <end position="102"/>
    </location>
</feature>
<feature type="region of interest" description="Disordered" evidence="4">
    <location>
        <begin position="111"/>
        <end position="189"/>
    </location>
</feature>
<feature type="region of interest" description="Disordered" evidence="4">
    <location>
        <begin position="224"/>
        <end position="307"/>
    </location>
</feature>
<feature type="region of interest" description="Disordered" evidence="4">
    <location>
        <begin position="389"/>
        <end position="410"/>
    </location>
</feature>
<feature type="region of interest" description="Disordered" evidence="4">
    <location>
        <begin position="490"/>
        <end position="536"/>
    </location>
</feature>
<feature type="coiled-coil region" evidence="2">
    <location>
        <begin position="705"/>
        <end position="780"/>
    </location>
</feature>
<feature type="compositionally biased region" description="Basic and acidic residues" evidence="4">
    <location>
        <begin position="129"/>
        <end position="152"/>
    </location>
</feature>
<feature type="compositionally biased region" description="Basic and acidic residues" evidence="4">
    <location>
        <begin position="241"/>
        <end position="256"/>
    </location>
</feature>
<feature type="compositionally biased region" description="Low complexity" evidence="4">
    <location>
        <begin position="507"/>
        <end position="517"/>
    </location>
</feature>
<feature type="compositionally biased region" description="Basic and acidic residues" evidence="4">
    <location>
        <begin position="525"/>
        <end position="536"/>
    </location>
</feature>
<protein>
    <recommendedName>
        <fullName>Pre-mRNA-splicing factor cef1</fullName>
    </recommendedName>
</protein>
<gene>
    <name type="primary">cef1</name>
    <name type="ORF">AFUA_2G05540</name>
</gene>
<reference key="1">
    <citation type="journal article" date="2005" name="Nature">
        <title>Genomic sequence of the pathogenic and allergenic filamentous fungus Aspergillus fumigatus.</title>
        <authorList>
            <person name="Nierman W.C."/>
            <person name="Pain A."/>
            <person name="Anderson M.J."/>
            <person name="Wortman J.R."/>
            <person name="Kim H.S."/>
            <person name="Arroyo J."/>
            <person name="Berriman M."/>
            <person name="Abe K."/>
            <person name="Archer D.B."/>
            <person name="Bermejo C."/>
            <person name="Bennett J.W."/>
            <person name="Bowyer P."/>
            <person name="Chen D."/>
            <person name="Collins M."/>
            <person name="Coulsen R."/>
            <person name="Davies R."/>
            <person name="Dyer P.S."/>
            <person name="Farman M.L."/>
            <person name="Fedorova N."/>
            <person name="Fedorova N.D."/>
            <person name="Feldblyum T.V."/>
            <person name="Fischer R."/>
            <person name="Fosker N."/>
            <person name="Fraser A."/>
            <person name="Garcia J.L."/>
            <person name="Garcia M.J."/>
            <person name="Goble A."/>
            <person name="Goldman G.H."/>
            <person name="Gomi K."/>
            <person name="Griffith-Jones S."/>
            <person name="Gwilliam R."/>
            <person name="Haas B.J."/>
            <person name="Haas H."/>
            <person name="Harris D.E."/>
            <person name="Horiuchi H."/>
            <person name="Huang J."/>
            <person name="Humphray S."/>
            <person name="Jimenez J."/>
            <person name="Keller N."/>
            <person name="Khouri H."/>
            <person name="Kitamoto K."/>
            <person name="Kobayashi T."/>
            <person name="Konzack S."/>
            <person name="Kulkarni R."/>
            <person name="Kumagai T."/>
            <person name="Lafton A."/>
            <person name="Latge J.-P."/>
            <person name="Li W."/>
            <person name="Lord A."/>
            <person name="Lu C."/>
            <person name="Majoros W.H."/>
            <person name="May G.S."/>
            <person name="Miller B.L."/>
            <person name="Mohamoud Y."/>
            <person name="Molina M."/>
            <person name="Monod M."/>
            <person name="Mouyna I."/>
            <person name="Mulligan S."/>
            <person name="Murphy L.D."/>
            <person name="O'Neil S."/>
            <person name="Paulsen I."/>
            <person name="Penalva M.A."/>
            <person name="Pertea M."/>
            <person name="Price C."/>
            <person name="Pritchard B.L."/>
            <person name="Quail M.A."/>
            <person name="Rabbinowitsch E."/>
            <person name="Rawlins N."/>
            <person name="Rajandream M.A."/>
            <person name="Reichard U."/>
            <person name="Renauld H."/>
            <person name="Robson G.D."/>
            <person name="Rodriguez de Cordoba S."/>
            <person name="Rodriguez-Pena J.M."/>
            <person name="Ronning C.M."/>
            <person name="Rutter S."/>
            <person name="Salzberg S.L."/>
            <person name="Sanchez M."/>
            <person name="Sanchez-Ferrero J.C."/>
            <person name="Saunders D."/>
            <person name="Seeger K."/>
            <person name="Squares R."/>
            <person name="Squares S."/>
            <person name="Takeuchi M."/>
            <person name="Tekaia F."/>
            <person name="Turner G."/>
            <person name="Vazquez de Aldana C.R."/>
            <person name="Weidman J."/>
            <person name="White O."/>
            <person name="Woodward J.R."/>
            <person name="Yu J.-H."/>
            <person name="Fraser C.M."/>
            <person name="Galagan J.E."/>
            <person name="Asai K."/>
            <person name="Machida M."/>
            <person name="Hall N."/>
            <person name="Barrell B.G."/>
            <person name="Denning D.W."/>
        </authorList>
    </citation>
    <scope>NUCLEOTIDE SEQUENCE [LARGE SCALE GENOMIC DNA]</scope>
    <source>
        <strain>ATCC MYA-4609 / CBS 101355 / FGSC A1100 / Af293</strain>
    </source>
</reference>
<evidence type="ECO:0000250" key="1"/>
<evidence type="ECO:0000255" key="2"/>
<evidence type="ECO:0000255" key="3">
    <source>
        <dbReference type="PROSITE-ProRule" id="PRU00625"/>
    </source>
</evidence>
<evidence type="ECO:0000256" key="4">
    <source>
        <dbReference type="SAM" id="MobiDB-lite"/>
    </source>
</evidence>
<evidence type="ECO:0000305" key="5"/>
<accession>Q4WHG0</accession>